<evidence type="ECO:0000255" key="1">
    <source>
        <dbReference type="HAMAP-Rule" id="MF_00005"/>
    </source>
</evidence>
<keyword id="KW-0028">Amino-acid biosynthesis</keyword>
<keyword id="KW-0055">Arginine biosynthesis</keyword>
<keyword id="KW-0067">ATP-binding</keyword>
<keyword id="KW-0963">Cytoplasm</keyword>
<keyword id="KW-0436">Ligase</keyword>
<keyword id="KW-0547">Nucleotide-binding</keyword>
<gene>
    <name evidence="1" type="primary">argG</name>
    <name type="ordered locus">gbs0123</name>
</gene>
<accession>Q8E7N1</accession>
<sequence length="396" mass="43725">MGKEKLILAYSGGLDTSVAIAWLKKDYDVIAVCMDVGEGKDLDFIHDKALTIGAIESYILDVKDEFAEHFVLPALQAHAMYEQKYPLVSALSRPIIAQKLVEMAHQTGATTIAHGCTGKGNDQVRFEVAIAALDPELKVIAPVREWKWHREEEITFAKANGVPIPADLDNPYSIDQNLWGRANECGVLENPWNQAPEEAFGITKSPEEAPDCAEYIDITFQNGKPIAINNQEMTLADLILSLNEIAGKHGIGRIDHVENRLVGIKSREIYECPAAMVLLAAHKEIEDLTLVREVSHFKPILENELSNLIYNALWFSPATKAIIAYVKETQKVVNGTTKVKLYKGSAKVVARHSSNSLYDENLATYTAADNFDQDAAVGFIKLWGLPTQVNAQVNKG</sequence>
<reference key="1">
    <citation type="journal article" date="2002" name="Mol. Microbiol.">
        <title>Genome sequence of Streptococcus agalactiae, a pathogen causing invasive neonatal disease.</title>
        <authorList>
            <person name="Glaser P."/>
            <person name="Rusniok C."/>
            <person name="Buchrieser C."/>
            <person name="Chevalier F."/>
            <person name="Frangeul L."/>
            <person name="Msadek T."/>
            <person name="Zouine M."/>
            <person name="Couve E."/>
            <person name="Lalioui L."/>
            <person name="Poyart C."/>
            <person name="Trieu-Cuot P."/>
            <person name="Kunst F."/>
        </authorList>
    </citation>
    <scope>NUCLEOTIDE SEQUENCE [LARGE SCALE GENOMIC DNA]</scope>
    <source>
        <strain>NEM316</strain>
    </source>
</reference>
<proteinExistence type="inferred from homology"/>
<dbReference type="EC" id="6.3.4.5" evidence="1"/>
<dbReference type="EMBL" id="AL766843">
    <property type="protein sequence ID" value="CAD45768.1"/>
    <property type="molecule type" value="Genomic_DNA"/>
</dbReference>
<dbReference type="RefSeq" id="WP_000514045.1">
    <property type="nucleotide sequence ID" value="NC_004368.1"/>
</dbReference>
<dbReference type="SMR" id="Q8E7N1"/>
<dbReference type="KEGG" id="san:gbs0123"/>
<dbReference type="eggNOG" id="COG0137">
    <property type="taxonomic scope" value="Bacteria"/>
</dbReference>
<dbReference type="HOGENOM" id="CLU_032784_4_2_9"/>
<dbReference type="UniPathway" id="UPA00068">
    <property type="reaction ID" value="UER00113"/>
</dbReference>
<dbReference type="Proteomes" id="UP000000823">
    <property type="component" value="Chromosome"/>
</dbReference>
<dbReference type="GO" id="GO:0005737">
    <property type="term" value="C:cytoplasm"/>
    <property type="evidence" value="ECO:0007669"/>
    <property type="project" value="UniProtKB-SubCell"/>
</dbReference>
<dbReference type="GO" id="GO:0004055">
    <property type="term" value="F:argininosuccinate synthase activity"/>
    <property type="evidence" value="ECO:0007669"/>
    <property type="project" value="UniProtKB-UniRule"/>
</dbReference>
<dbReference type="GO" id="GO:0005524">
    <property type="term" value="F:ATP binding"/>
    <property type="evidence" value="ECO:0007669"/>
    <property type="project" value="UniProtKB-UniRule"/>
</dbReference>
<dbReference type="GO" id="GO:0000053">
    <property type="term" value="P:argininosuccinate metabolic process"/>
    <property type="evidence" value="ECO:0007669"/>
    <property type="project" value="TreeGrafter"/>
</dbReference>
<dbReference type="GO" id="GO:0006526">
    <property type="term" value="P:L-arginine biosynthetic process"/>
    <property type="evidence" value="ECO:0007669"/>
    <property type="project" value="UniProtKB-UniRule"/>
</dbReference>
<dbReference type="GO" id="GO:0000050">
    <property type="term" value="P:urea cycle"/>
    <property type="evidence" value="ECO:0007669"/>
    <property type="project" value="TreeGrafter"/>
</dbReference>
<dbReference type="CDD" id="cd01999">
    <property type="entry name" value="ASS"/>
    <property type="match status" value="1"/>
</dbReference>
<dbReference type="FunFam" id="1.20.5.470:FF:000002">
    <property type="entry name" value="Argininosuccinate synthase"/>
    <property type="match status" value="1"/>
</dbReference>
<dbReference type="FunFam" id="3.40.50.620:FF:000038">
    <property type="entry name" value="Argininosuccinate synthase"/>
    <property type="match status" value="1"/>
</dbReference>
<dbReference type="FunFam" id="3.90.1260.10:FF:000007">
    <property type="entry name" value="Argininosuccinate synthase"/>
    <property type="match status" value="1"/>
</dbReference>
<dbReference type="Gene3D" id="3.90.1260.10">
    <property type="entry name" value="Argininosuccinate synthetase, chain A, domain 2"/>
    <property type="match status" value="1"/>
</dbReference>
<dbReference type="Gene3D" id="3.40.50.620">
    <property type="entry name" value="HUPs"/>
    <property type="match status" value="1"/>
</dbReference>
<dbReference type="Gene3D" id="1.20.5.470">
    <property type="entry name" value="Single helix bin"/>
    <property type="match status" value="1"/>
</dbReference>
<dbReference type="HAMAP" id="MF_00005">
    <property type="entry name" value="Arg_succ_synth_type1"/>
    <property type="match status" value="1"/>
</dbReference>
<dbReference type="InterPro" id="IPR048268">
    <property type="entry name" value="Arginosuc_syn_C"/>
</dbReference>
<dbReference type="InterPro" id="IPR048267">
    <property type="entry name" value="Arginosuc_syn_N"/>
</dbReference>
<dbReference type="InterPro" id="IPR001518">
    <property type="entry name" value="Arginosuc_synth"/>
</dbReference>
<dbReference type="InterPro" id="IPR018223">
    <property type="entry name" value="Arginosuc_synth_CS"/>
</dbReference>
<dbReference type="InterPro" id="IPR023434">
    <property type="entry name" value="Arginosuc_synth_type_1_subfam"/>
</dbReference>
<dbReference type="InterPro" id="IPR024074">
    <property type="entry name" value="AS_cat/multimer_dom_body"/>
</dbReference>
<dbReference type="InterPro" id="IPR014729">
    <property type="entry name" value="Rossmann-like_a/b/a_fold"/>
</dbReference>
<dbReference type="NCBIfam" id="TIGR00032">
    <property type="entry name" value="argG"/>
    <property type="match status" value="1"/>
</dbReference>
<dbReference type="NCBIfam" id="NF001770">
    <property type="entry name" value="PRK00509.1"/>
    <property type="match status" value="1"/>
</dbReference>
<dbReference type="PANTHER" id="PTHR11587">
    <property type="entry name" value="ARGININOSUCCINATE SYNTHASE"/>
    <property type="match status" value="1"/>
</dbReference>
<dbReference type="PANTHER" id="PTHR11587:SF2">
    <property type="entry name" value="ARGININOSUCCINATE SYNTHASE"/>
    <property type="match status" value="1"/>
</dbReference>
<dbReference type="Pfam" id="PF20979">
    <property type="entry name" value="Arginosuc_syn_C"/>
    <property type="match status" value="1"/>
</dbReference>
<dbReference type="Pfam" id="PF00764">
    <property type="entry name" value="Arginosuc_synth"/>
    <property type="match status" value="1"/>
</dbReference>
<dbReference type="SUPFAM" id="SSF52402">
    <property type="entry name" value="Adenine nucleotide alpha hydrolases-like"/>
    <property type="match status" value="1"/>
</dbReference>
<dbReference type="SUPFAM" id="SSF69864">
    <property type="entry name" value="Argininosuccinate synthetase, C-terminal domain"/>
    <property type="match status" value="1"/>
</dbReference>
<dbReference type="PROSITE" id="PS00564">
    <property type="entry name" value="ARGININOSUCCIN_SYN_1"/>
    <property type="match status" value="1"/>
</dbReference>
<dbReference type="PROSITE" id="PS00565">
    <property type="entry name" value="ARGININOSUCCIN_SYN_2"/>
    <property type="match status" value="1"/>
</dbReference>
<comment type="catalytic activity">
    <reaction evidence="1">
        <text>L-citrulline + L-aspartate + ATP = 2-(N(omega)-L-arginino)succinate + AMP + diphosphate + H(+)</text>
        <dbReference type="Rhea" id="RHEA:10932"/>
        <dbReference type="ChEBI" id="CHEBI:15378"/>
        <dbReference type="ChEBI" id="CHEBI:29991"/>
        <dbReference type="ChEBI" id="CHEBI:30616"/>
        <dbReference type="ChEBI" id="CHEBI:33019"/>
        <dbReference type="ChEBI" id="CHEBI:57472"/>
        <dbReference type="ChEBI" id="CHEBI:57743"/>
        <dbReference type="ChEBI" id="CHEBI:456215"/>
        <dbReference type="EC" id="6.3.4.5"/>
    </reaction>
</comment>
<comment type="pathway">
    <text evidence="1">Amino-acid biosynthesis; L-arginine biosynthesis; L-arginine from L-ornithine and carbamoyl phosphate: step 2/3.</text>
</comment>
<comment type="subunit">
    <text evidence="1">Homotetramer.</text>
</comment>
<comment type="subcellular location">
    <subcellularLocation>
        <location evidence="1">Cytoplasm</location>
    </subcellularLocation>
</comment>
<comment type="similarity">
    <text evidence="1">Belongs to the argininosuccinate synthase family. Type 1 subfamily.</text>
</comment>
<protein>
    <recommendedName>
        <fullName evidence="1">Argininosuccinate synthase</fullName>
        <ecNumber evidence="1">6.3.4.5</ecNumber>
    </recommendedName>
    <alternativeName>
        <fullName evidence="1">Citrulline--aspartate ligase</fullName>
    </alternativeName>
</protein>
<name>ASSY_STRA3</name>
<feature type="chain" id="PRO_0000148643" description="Argininosuccinate synthase">
    <location>
        <begin position="1"/>
        <end position="396"/>
    </location>
</feature>
<feature type="binding site" evidence="1">
    <location>
        <begin position="9"/>
        <end position="17"/>
    </location>
    <ligand>
        <name>ATP</name>
        <dbReference type="ChEBI" id="CHEBI:30616"/>
    </ligand>
</feature>
<feature type="binding site" evidence="1">
    <location>
        <position position="85"/>
    </location>
    <ligand>
        <name>L-citrulline</name>
        <dbReference type="ChEBI" id="CHEBI:57743"/>
    </ligand>
</feature>
<feature type="binding site" evidence="1">
    <location>
        <position position="115"/>
    </location>
    <ligand>
        <name>ATP</name>
        <dbReference type="ChEBI" id="CHEBI:30616"/>
    </ligand>
</feature>
<feature type="binding site" evidence="1">
    <location>
        <position position="117"/>
    </location>
    <ligand>
        <name>L-aspartate</name>
        <dbReference type="ChEBI" id="CHEBI:29991"/>
    </ligand>
</feature>
<feature type="binding site" evidence="1">
    <location>
        <position position="121"/>
    </location>
    <ligand>
        <name>L-aspartate</name>
        <dbReference type="ChEBI" id="CHEBI:29991"/>
    </ligand>
</feature>
<feature type="binding site" evidence="1">
    <location>
        <position position="121"/>
    </location>
    <ligand>
        <name>L-citrulline</name>
        <dbReference type="ChEBI" id="CHEBI:57743"/>
    </ligand>
</feature>
<feature type="binding site" evidence="1">
    <location>
        <position position="122"/>
    </location>
    <ligand>
        <name>L-aspartate</name>
        <dbReference type="ChEBI" id="CHEBI:29991"/>
    </ligand>
</feature>
<feature type="binding site" evidence="1">
    <location>
        <position position="125"/>
    </location>
    <ligand>
        <name>L-citrulline</name>
        <dbReference type="ChEBI" id="CHEBI:57743"/>
    </ligand>
</feature>
<feature type="binding site" evidence="1">
    <location>
        <position position="173"/>
    </location>
    <ligand>
        <name>L-citrulline</name>
        <dbReference type="ChEBI" id="CHEBI:57743"/>
    </ligand>
</feature>
<feature type="binding site" evidence="1">
    <location>
        <position position="258"/>
    </location>
    <ligand>
        <name>L-citrulline</name>
        <dbReference type="ChEBI" id="CHEBI:57743"/>
    </ligand>
</feature>
<feature type="binding site" evidence="1">
    <location>
        <position position="270"/>
    </location>
    <ligand>
        <name>L-citrulline</name>
        <dbReference type="ChEBI" id="CHEBI:57743"/>
    </ligand>
</feature>
<organism>
    <name type="scientific">Streptococcus agalactiae serotype III (strain NEM316)</name>
    <dbReference type="NCBI Taxonomy" id="211110"/>
    <lineage>
        <taxon>Bacteria</taxon>
        <taxon>Bacillati</taxon>
        <taxon>Bacillota</taxon>
        <taxon>Bacilli</taxon>
        <taxon>Lactobacillales</taxon>
        <taxon>Streptococcaceae</taxon>
        <taxon>Streptococcus</taxon>
    </lineage>
</organism>